<protein>
    <recommendedName>
        <fullName evidence="2">Large ribosomal subunit protein uL18</fullName>
    </recommendedName>
    <alternativeName>
        <fullName>60S ribosomal protein L5</fullName>
    </alternativeName>
</protein>
<reference key="1">
    <citation type="journal article" date="2005" name="Nature">
        <title>The genome of the social amoeba Dictyostelium discoideum.</title>
        <authorList>
            <person name="Eichinger L."/>
            <person name="Pachebat J.A."/>
            <person name="Gloeckner G."/>
            <person name="Rajandream M.A."/>
            <person name="Sucgang R."/>
            <person name="Berriman M."/>
            <person name="Song J."/>
            <person name="Olsen R."/>
            <person name="Szafranski K."/>
            <person name="Xu Q."/>
            <person name="Tunggal B."/>
            <person name="Kummerfeld S."/>
            <person name="Madera M."/>
            <person name="Konfortov B.A."/>
            <person name="Rivero F."/>
            <person name="Bankier A.T."/>
            <person name="Lehmann R."/>
            <person name="Hamlin N."/>
            <person name="Davies R."/>
            <person name="Gaudet P."/>
            <person name="Fey P."/>
            <person name="Pilcher K."/>
            <person name="Chen G."/>
            <person name="Saunders D."/>
            <person name="Sodergren E.J."/>
            <person name="Davis P."/>
            <person name="Kerhornou A."/>
            <person name="Nie X."/>
            <person name="Hall N."/>
            <person name="Anjard C."/>
            <person name="Hemphill L."/>
            <person name="Bason N."/>
            <person name="Farbrother P."/>
            <person name="Desany B."/>
            <person name="Just E."/>
            <person name="Morio T."/>
            <person name="Rost R."/>
            <person name="Churcher C.M."/>
            <person name="Cooper J."/>
            <person name="Haydock S."/>
            <person name="van Driessche N."/>
            <person name="Cronin A."/>
            <person name="Goodhead I."/>
            <person name="Muzny D.M."/>
            <person name="Mourier T."/>
            <person name="Pain A."/>
            <person name="Lu M."/>
            <person name="Harper D."/>
            <person name="Lindsay R."/>
            <person name="Hauser H."/>
            <person name="James K.D."/>
            <person name="Quiles M."/>
            <person name="Madan Babu M."/>
            <person name="Saito T."/>
            <person name="Buchrieser C."/>
            <person name="Wardroper A."/>
            <person name="Felder M."/>
            <person name="Thangavelu M."/>
            <person name="Johnson D."/>
            <person name="Knights A."/>
            <person name="Loulseged H."/>
            <person name="Mungall K.L."/>
            <person name="Oliver K."/>
            <person name="Price C."/>
            <person name="Quail M.A."/>
            <person name="Urushihara H."/>
            <person name="Hernandez J."/>
            <person name="Rabbinowitsch E."/>
            <person name="Steffen D."/>
            <person name="Sanders M."/>
            <person name="Ma J."/>
            <person name="Kohara Y."/>
            <person name="Sharp S."/>
            <person name="Simmonds M.N."/>
            <person name="Spiegler S."/>
            <person name="Tivey A."/>
            <person name="Sugano S."/>
            <person name="White B."/>
            <person name="Walker D."/>
            <person name="Woodward J.R."/>
            <person name="Winckler T."/>
            <person name="Tanaka Y."/>
            <person name="Shaulsky G."/>
            <person name="Schleicher M."/>
            <person name="Weinstock G.M."/>
            <person name="Rosenthal A."/>
            <person name="Cox E.C."/>
            <person name="Chisholm R.L."/>
            <person name="Gibbs R.A."/>
            <person name="Loomis W.F."/>
            <person name="Platzer M."/>
            <person name="Kay R.R."/>
            <person name="Williams J.G."/>
            <person name="Dear P.H."/>
            <person name="Noegel A.A."/>
            <person name="Barrell B.G."/>
            <person name="Kuspa A."/>
        </authorList>
    </citation>
    <scope>NUCLEOTIDE SEQUENCE [LARGE SCALE GENOMIC DNA]</scope>
    <source>
        <strain>AX4</strain>
    </source>
</reference>
<reference key="2">
    <citation type="submission" date="2009-07" db="UniProtKB">
        <authorList>
            <person name="Bienvenut W.V."/>
            <person name="Ura S."/>
            <person name="Insall R.H."/>
        </authorList>
    </citation>
    <scope>PROTEIN SEQUENCE OF 55-68; 144-152; 165-179; 222-228 AND 235-245</scope>
    <scope>IDENTIFICATION BY MASS SPECTROMETRY</scope>
    <source>
        <strain>AX2</strain>
    </source>
</reference>
<sequence length="292" mass="32804">MGFVKVVKTKAYYSRYQVQFRRRREGKTDYQQRHRLITQDKNKYNSPKYRLVARITNTDVIAQVVYSKIVGDFVLCAAYAHELPRFGVKVGLTNYASCYATGLLLARRLLAKLKLADLYKGAEKVDGKVFLVKPVDDKPRPFKANLDVGLARTSTGAKVFAVLKGAVDGGIYVPHGETRFAGYNAESKKLNAETLRGYIFGKHVASYMTLLQTEDEDAYKKIFSQYIKNGVAPKDIETIYANAHKAIRANPAPAAKSTKSYKDIKSKNLSKRTLKQKKARVASIKASYKARL</sequence>
<dbReference type="EMBL" id="AAFI02000023">
    <property type="protein sequence ID" value="EAL68442.1"/>
    <property type="molecule type" value="Genomic_DNA"/>
</dbReference>
<dbReference type="RefSeq" id="XP_642429.1">
    <property type="nucleotide sequence ID" value="XM_637337.1"/>
</dbReference>
<dbReference type="SMR" id="Q54XX3"/>
<dbReference type="FunCoup" id="Q54XX3">
    <property type="interactions" value="638"/>
</dbReference>
<dbReference type="STRING" id="44689.Q54XX3"/>
<dbReference type="PaxDb" id="44689-DDB0231242"/>
<dbReference type="EnsemblProtists" id="EAL68442">
    <property type="protein sequence ID" value="EAL68442"/>
    <property type="gene ID" value="DDB_G0278539"/>
</dbReference>
<dbReference type="GeneID" id="8621634"/>
<dbReference type="KEGG" id="ddi:DDB_G0278539"/>
<dbReference type="dictyBase" id="DDB_G0278539">
    <property type="gene designation" value="rpl5"/>
</dbReference>
<dbReference type="VEuPathDB" id="AmoebaDB:DDB_G0278539"/>
<dbReference type="eggNOG" id="KOG0875">
    <property type="taxonomic scope" value="Eukaryota"/>
</dbReference>
<dbReference type="HOGENOM" id="CLU_056222_1_0_1"/>
<dbReference type="InParanoid" id="Q54XX3"/>
<dbReference type="OMA" id="CQIASAH"/>
<dbReference type="PhylomeDB" id="Q54XX3"/>
<dbReference type="Reactome" id="R-DDI-156827">
    <property type="pathway name" value="L13a-mediated translational silencing of Ceruloplasmin expression"/>
</dbReference>
<dbReference type="Reactome" id="R-DDI-1799339">
    <property type="pathway name" value="SRP-dependent cotranslational protein targeting to membrane"/>
</dbReference>
<dbReference type="Reactome" id="R-DDI-72689">
    <property type="pathway name" value="Formation of a pool of free 40S subunits"/>
</dbReference>
<dbReference type="Reactome" id="R-DDI-72706">
    <property type="pathway name" value="GTP hydrolysis and joining of the 60S ribosomal subunit"/>
</dbReference>
<dbReference type="Reactome" id="R-DDI-975956">
    <property type="pathway name" value="Nonsense Mediated Decay (NMD) independent of the Exon Junction Complex (EJC)"/>
</dbReference>
<dbReference type="Reactome" id="R-DDI-975957">
    <property type="pathway name" value="Nonsense Mediated Decay (NMD) enhanced by the Exon Junction Complex (EJC)"/>
</dbReference>
<dbReference type="PRO" id="PR:Q54XX3"/>
<dbReference type="Proteomes" id="UP000002195">
    <property type="component" value="Chromosome 3"/>
</dbReference>
<dbReference type="GO" id="GO:0022625">
    <property type="term" value="C:cytosolic large ribosomal subunit"/>
    <property type="evidence" value="ECO:0000318"/>
    <property type="project" value="GO_Central"/>
</dbReference>
<dbReference type="GO" id="GO:0031012">
    <property type="term" value="C:extracellular matrix"/>
    <property type="evidence" value="ECO:0007005"/>
    <property type="project" value="dictyBase"/>
</dbReference>
<dbReference type="GO" id="GO:0005634">
    <property type="term" value="C:nucleus"/>
    <property type="evidence" value="ECO:0007669"/>
    <property type="project" value="UniProtKB-SubCell"/>
</dbReference>
<dbReference type="GO" id="GO:0008097">
    <property type="term" value="F:5S rRNA binding"/>
    <property type="evidence" value="ECO:0000318"/>
    <property type="project" value="GO_Central"/>
</dbReference>
<dbReference type="GO" id="GO:0003735">
    <property type="term" value="F:structural constituent of ribosome"/>
    <property type="evidence" value="ECO:0000318"/>
    <property type="project" value="GO_Central"/>
</dbReference>
<dbReference type="GO" id="GO:0000027">
    <property type="term" value="P:ribosomal large subunit assembly"/>
    <property type="evidence" value="ECO:0000318"/>
    <property type="project" value="GO_Central"/>
</dbReference>
<dbReference type="GO" id="GO:0006412">
    <property type="term" value="P:translation"/>
    <property type="evidence" value="ECO:0007669"/>
    <property type="project" value="InterPro"/>
</dbReference>
<dbReference type="CDD" id="cd00432">
    <property type="entry name" value="Ribosomal_L18_L5e"/>
    <property type="match status" value="1"/>
</dbReference>
<dbReference type="FunFam" id="3.30.420.100:FF:000002">
    <property type="entry name" value="60S ribosomal protein L5"/>
    <property type="match status" value="1"/>
</dbReference>
<dbReference type="Gene3D" id="3.30.420.100">
    <property type="match status" value="1"/>
</dbReference>
<dbReference type="HAMAP" id="MF_01337_A">
    <property type="entry name" value="Ribosomal_uL18_A"/>
    <property type="match status" value="1"/>
</dbReference>
<dbReference type="InterPro" id="IPR005485">
    <property type="entry name" value="Rbsml_uL18_euk"/>
</dbReference>
<dbReference type="InterPro" id="IPR025607">
    <property type="entry name" value="Ribosomal_uL18_C_euk"/>
</dbReference>
<dbReference type="PANTHER" id="PTHR23410:SF12">
    <property type="entry name" value="LARGE RIBOSOMAL SUBUNIT PROTEIN UL18"/>
    <property type="match status" value="1"/>
</dbReference>
<dbReference type="PANTHER" id="PTHR23410">
    <property type="entry name" value="RIBOSOMAL PROTEIN L5-RELATED"/>
    <property type="match status" value="1"/>
</dbReference>
<dbReference type="Pfam" id="PF14204">
    <property type="entry name" value="Ribosomal_L18_c"/>
    <property type="match status" value="1"/>
</dbReference>
<dbReference type="Pfam" id="PF17144">
    <property type="entry name" value="Ribosomal_L5e"/>
    <property type="match status" value="1"/>
</dbReference>
<dbReference type="PRINTS" id="PR00058">
    <property type="entry name" value="RIBOSOMALL5"/>
</dbReference>
<dbReference type="SUPFAM" id="SSF53137">
    <property type="entry name" value="Translational machinery components"/>
    <property type="match status" value="1"/>
</dbReference>
<keyword id="KW-0963">Cytoplasm</keyword>
<keyword id="KW-0903">Direct protein sequencing</keyword>
<keyword id="KW-0539">Nucleus</keyword>
<keyword id="KW-1185">Reference proteome</keyword>
<keyword id="KW-0687">Ribonucleoprotein</keyword>
<keyword id="KW-0689">Ribosomal protein</keyword>
<keyword id="KW-0694">RNA-binding</keyword>
<keyword id="KW-0699">rRNA-binding</keyword>
<gene>
    <name type="primary">rpl5</name>
    <name type="ORF">DDB_G0278539</name>
</gene>
<proteinExistence type="evidence at protein level"/>
<accession>Q54XX3</accession>
<feature type="chain" id="PRO_0000291563" description="Large ribosomal subunit protein uL18">
    <location>
        <begin position="1"/>
        <end position="292"/>
    </location>
</feature>
<organism>
    <name type="scientific">Dictyostelium discoideum</name>
    <name type="common">Social amoeba</name>
    <dbReference type="NCBI Taxonomy" id="44689"/>
    <lineage>
        <taxon>Eukaryota</taxon>
        <taxon>Amoebozoa</taxon>
        <taxon>Evosea</taxon>
        <taxon>Eumycetozoa</taxon>
        <taxon>Dictyostelia</taxon>
        <taxon>Dictyosteliales</taxon>
        <taxon>Dictyosteliaceae</taxon>
        <taxon>Dictyostelium</taxon>
    </lineage>
</organism>
<comment type="function">
    <text evidence="1">Component of the ribosome, a large ribonucleoprotein complex responsible for the synthesis of proteins in the cell. The small ribosomal subunit (SSU) binds messenger RNAs (mRNAs) and translates the encoded message by selecting cognate aminoacyl-transfer RNA (tRNA) molecules. The large subunit (LSU) contains the ribosomal catalytic site termed the peptidyl transferase center (PTC), which catalyzes the formation of peptide bonds, thereby polymerizing the amino acids delivered by tRNAs into a polypeptide chain. The nascent polypeptides leave the ribosome through a tunnel in the LSU and interact with protein factors that function in enzymatic processing, targeting, and the membrane insertion of nascent chains at the exit of the ribosomal tunnel.</text>
</comment>
<comment type="subunit">
    <text evidence="1">Component of the large ribosomal subunit (LSU).</text>
</comment>
<comment type="subcellular location">
    <subcellularLocation>
        <location evidence="1">Cytoplasm</location>
    </subcellularLocation>
    <subcellularLocation>
        <location evidence="1">Nucleus</location>
    </subcellularLocation>
</comment>
<comment type="similarity">
    <text evidence="2">Belongs to the universal ribosomal protein uL18 family.</text>
</comment>
<evidence type="ECO:0000250" key="1">
    <source>
        <dbReference type="UniProtKB" id="P26321"/>
    </source>
</evidence>
<evidence type="ECO:0000305" key="2"/>
<name>RL5_DICDI</name>